<evidence type="ECO:0000255" key="1">
    <source>
        <dbReference type="HAMAP-Rule" id="MF_00054"/>
    </source>
</evidence>
<comment type="function">
    <text evidence="1">Catalyzes the GTP-dependent ribosomal translocation step during translation elongation. During this step, the ribosome changes from the pre-translocational (PRE) to the post-translocational (POST) state as the newly formed A-site-bound peptidyl-tRNA and P-site-bound deacylated tRNA move to the P and E sites, respectively. Catalyzes the coordinated movement of the two tRNA molecules, the mRNA and conformational changes in the ribosome.</text>
</comment>
<comment type="subcellular location">
    <subcellularLocation>
        <location evidence="1">Cytoplasm</location>
    </subcellularLocation>
</comment>
<comment type="similarity">
    <text evidence="1">Belongs to the TRAFAC class translation factor GTPase superfamily. Classic translation factor GTPase family. EF-G/EF-2 subfamily.</text>
</comment>
<proteinExistence type="inferred from homology"/>
<organism>
    <name type="scientific">Chlorobium phaeobacteroides (strain BS1)</name>
    <dbReference type="NCBI Taxonomy" id="331678"/>
    <lineage>
        <taxon>Bacteria</taxon>
        <taxon>Pseudomonadati</taxon>
        <taxon>Chlorobiota</taxon>
        <taxon>Chlorobiia</taxon>
        <taxon>Chlorobiales</taxon>
        <taxon>Chlorobiaceae</taxon>
        <taxon>Chlorobium/Pelodictyon group</taxon>
        <taxon>Chlorobium</taxon>
    </lineage>
</organism>
<dbReference type="EMBL" id="CP001101">
    <property type="protein sequence ID" value="ACE05203.1"/>
    <property type="molecule type" value="Genomic_DNA"/>
</dbReference>
<dbReference type="SMR" id="B3EP64"/>
<dbReference type="STRING" id="331678.Cphamn1_2299"/>
<dbReference type="KEGG" id="cpb:Cphamn1_2299"/>
<dbReference type="eggNOG" id="COG0480">
    <property type="taxonomic scope" value="Bacteria"/>
</dbReference>
<dbReference type="HOGENOM" id="CLU_002794_4_1_10"/>
<dbReference type="OrthoDB" id="9801591at2"/>
<dbReference type="GO" id="GO:0005737">
    <property type="term" value="C:cytoplasm"/>
    <property type="evidence" value="ECO:0007669"/>
    <property type="project" value="UniProtKB-SubCell"/>
</dbReference>
<dbReference type="GO" id="GO:0005525">
    <property type="term" value="F:GTP binding"/>
    <property type="evidence" value="ECO:0007669"/>
    <property type="project" value="UniProtKB-UniRule"/>
</dbReference>
<dbReference type="GO" id="GO:0003924">
    <property type="term" value="F:GTPase activity"/>
    <property type="evidence" value="ECO:0007669"/>
    <property type="project" value="InterPro"/>
</dbReference>
<dbReference type="GO" id="GO:0003746">
    <property type="term" value="F:translation elongation factor activity"/>
    <property type="evidence" value="ECO:0007669"/>
    <property type="project" value="UniProtKB-UniRule"/>
</dbReference>
<dbReference type="GO" id="GO:0032790">
    <property type="term" value="P:ribosome disassembly"/>
    <property type="evidence" value="ECO:0007669"/>
    <property type="project" value="TreeGrafter"/>
</dbReference>
<dbReference type="CDD" id="cd01886">
    <property type="entry name" value="EF-G"/>
    <property type="match status" value="1"/>
</dbReference>
<dbReference type="CDD" id="cd16262">
    <property type="entry name" value="EFG_III"/>
    <property type="match status" value="1"/>
</dbReference>
<dbReference type="CDD" id="cd01434">
    <property type="entry name" value="EFG_mtEFG1_IV"/>
    <property type="match status" value="1"/>
</dbReference>
<dbReference type="CDD" id="cd03713">
    <property type="entry name" value="EFG_mtEFG_C"/>
    <property type="match status" value="1"/>
</dbReference>
<dbReference type="CDD" id="cd04088">
    <property type="entry name" value="EFG_mtEFG_II"/>
    <property type="match status" value="1"/>
</dbReference>
<dbReference type="FunFam" id="2.40.30.10:FF:000006">
    <property type="entry name" value="Elongation factor G"/>
    <property type="match status" value="1"/>
</dbReference>
<dbReference type="FunFam" id="3.30.230.10:FF:000003">
    <property type="entry name" value="Elongation factor G"/>
    <property type="match status" value="1"/>
</dbReference>
<dbReference type="FunFam" id="3.30.70.240:FF:000001">
    <property type="entry name" value="Elongation factor G"/>
    <property type="match status" value="1"/>
</dbReference>
<dbReference type="FunFam" id="3.30.70.870:FF:000001">
    <property type="entry name" value="Elongation factor G"/>
    <property type="match status" value="1"/>
</dbReference>
<dbReference type="FunFam" id="3.40.50.300:FF:000029">
    <property type="entry name" value="Elongation factor G"/>
    <property type="match status" value="1"/>
</dbReference>
<dbReference type="Gene3D" id="3.30.230.10">
    <property type="match status" value="1"/>
</dbReference>
<dbReference type="Gene3D" id="3.30.70.240">
    <property type="match status" value="1"/>
</dbReference>
<dbReference type="Gene3D" id="3.30.70.870">
    <property type="entry name" value="Elongation Factor G (Translational Gtpase), domain 3"/>
    <property type="match status" value="1"/>
</dbReference>
<dbReference type="Gene3D" id="3.40.50.300">
    <property type="entry name" value="P-loop containing nucleotide triphosphate hydrolases"/>
    <property type="match status" value="1"/>
</dbReference>
<dbReference type="Gene3D" id="2.40.30.10">
    <property type="entry name" value="Translation factors"/>
    <property type="match status" value="1"/>
</dbReference>
<dbReference type="HAMAP" id="MF_00054_B">
    <property type="entry name" value="EF_G_EF_2_B"/>
    <property type="match status" value="1"/>
</dbReference>
<dbReference type="InterPro" id="IPR041095">
    <property type="entry name" value="EFG_II"/>
</dbReference>
<dbReference type="InterPro" id="IPR009022">
    <property type="entry name" value="EFG_III"/>
</dbReference>
<dbReference type="InterPro" id="IPR035647">
    <property type="entry name" value="EFG_III/V"/>
</dbReference>
<dbReference type="InterPro" id="IPR047872">
    <property type="entry name" value="EFG_IV"/>
</dbReference>
<dbReference type="InterPro" id="IPR035649">
    <property type="entry name" value="EFG_V"/>
</dbReference>
<dbReference type="InterPro" id="IPR000640">
    <property type="entry name" value="EFG_V-like"/>
</dbReference>
<dbReference type="InterPro" id="IPR004161">
    <property type="entry name" value="EFTu-like_2"/>
</dbReference>
<dbReference type="InterPro" id="IPR031157">
    <property type="entry name" value="G_TR_CS"/>
</dbReference>
<dbReference type="InterPro" id="IPR027417">
    <property type="entry name" value="P-loop_NTPase"/>
</dbReference>
<dbReference type="InterPro" id="IPR020568">
    <property type="entry name" value="Ribosomal_Su5_D2-typ_SF"/>
</dbReference>
<dbReference type="InterPro" id="IPR014721">
    <property type="entry name" value="Ribsml_uS5_D2-typ_fold_subgr"/>
</dbReference>
<dbReference type="InterPro" id="IPR005225">
    <property type="entry name" value="Small_GTP-bd"/>
</dbReference>
<dbReference type="InterPro" id="IPR000795">
    <property type="entry name" value="T_Tr_GTP-bd_dom"/>
</dbReference>
<dbReference type="InterPro" id="IPR009000">
    <property type="entry name" value="Transl_B-barrel_sf"/>
</dbReference>
<dbReference type="InterPro" id="IPR004540">
    <property type="entry name" value="Transl_elong_EFG/EF2"/>
</dbReference>
<dbReference type="InterPro" id="IPR005517">
    <property type="entry name" value="Transl_elong_EFG/EF2_IV"/>
</dbReference>
<dbReference type="NCBIfam" id="TIGR00484">
    <property type="entry name" value="EF-G"/>
    <property type="match status" value="1"/>
</dbReference>
<dbReference type="NCBIfam" id="NF009381">
    <property type="entry name" value="PRK12740.1-5"/>
    <property type="match status" value="1"/>
</dbReference>
<dbReference type="NCBIfam" id="TIGR00231">
    <property type="entry name" value="small_GTP"/>
    <property type="match status" value="1"/>
</dbReference>
<dbReference type="PANTHER" id="PTHR43261:SF1">
    <property type="entry name" value="RIBOSOME-RELEASING FACTOR 2, MITOCHONDRIAL"/>
    <property type="match status" value="1"/>
</dbReference>
<dbReference type="PANTHER" id="PTHR43261">
    <property type="entry name" value="TRANSLATION ELONGATION FACTOR G-RELATED"/>
    <property type="match status" value="1"/>
</dbReference>
<dbReference type="Pfam" id="PF00679">
    <property type="entry name" value="EFG_C"/>
    <property type="match status" value="1"/>
</dbReference>
<dbReference type="Pfam" id="PF14492">
    <property type="entry name" value="EFG_III"/>
    <property type="match status" value="1"/>
</dbReference>
<dbReference type="Pfam" id="PF03764">
    <property type="entry name" value="EFG_IV"/>
    <property type="match status" value="1"/>
</dbReference>
<dbReference type="Pfam" id="PF00009">
    <property type="entry name" value="GTP_EFTU"/>
    <property type="match status" value="1"/>
</dbReference>
<dbReference type="Pfam" id="PF03144">
    <property type="entry name" value="GTP_EFTU_D2"/>
    <property type="match status" value="1"/>
</dbReference>
<dbReference type="PRINTS" id="PR00315">
    <property type="entry name" value="ELONGATNFCT"/>
</dbReference>
<dbReference type="SMART" id="SM00838">
    <property type="entry name" value="EFG_C"/>
    <property type="match status" value="1"/>
</dbReference>
<dbReference type="SMART" id="SM00889">
    <property type="entry name" value="EFG_IV"/>
    <property type="match status" value="1"/>
</dbReference>
<dbReference type="SUPFAM" id="SSF54980">
    <property type="entry name" value="EF-G C-terminal domain-like"/>
    <property type="match status" value="2"/>
</dbReference>
<dbReference type="SUPFAM" id="SSF52540">
    <property type="entry name" value="P-loop containing nucleoside triphosphate hydrolases"/>
    <property type="match status" value="1"/>
</dbReference>
<dbReference type="SUPFAM" id="SSF54211">
    <property type="entry name" value="Ribosomal protein S5 domain 2-like"/>
    <property type="match status" value="1"/>
</dbReference>
<dbReference type="SUPFAM" id="SSF50447">
    <property type="entry name" value="Translation proteins"/>
    <property type="match status" value="1"/>
</dbReference>
<dbReference type="PROSITE" id="PS00301">
    <property type="entry name" value="G_TR_1"/>
    <property type="match status" value="1"/>
</dbReference>
<dbReference type="PROSITE" id="PS51722">
    <property type="entry name" value="G_TR_2"/>
    <property type="match status" value="1"/>
</dbReference>
<accession>B3EP64</accession>
<keyword id="KW-0963">Cytoplasm</keyword>
<keyword id="KW-0251">Elongation factor</keyword>
<keyword id="KW-0342">GTP-binding</keyword>
<keyword id="KW-0547">Nucleotide-binding</keyword>
<keyword id="KW-0648">Protein biosynthesis</keyword>
<feature type="chain" id="PRO_1000091697" description="Elongation factor G">
    <location>
        <begin position="1"/>
        <end position="704"/>
    </location>
</feature>
<feature type="domain" description="tr-type G">
    <location>
        <begin position="8"/>
        <end position="291"/>
    </location>
</feature>
<feature type="binding site" evidence="1">
    <location>
        <begin position="17"/>
        <end position="24"/>
    </location>
    <ligand>
        <name>GTP</name>
        <dbReference type="ChEBI" id="CHEBI:37565"/>
    </ligand>
</feature>
<feature type="binding site" evidence="1">
    <location>
        <begin position="90"/>
        <end position="94"/>
    </location>
    <ligand>
        <name>GTP</name>
        <dbReference type="ChEBI" id="CHEBI:37565"/>
    </ligand>
</feature>
<feature type="binding site" evidence="1">
    <location>
        <begin position="144"/>
        <end position="147"/>
    </location>
    <ligand>
        <name>GTP</name>
        <dbReference type="ChEBI" id="CHEBI:37565"/>
    </ligand>
</feature>
<protein>
    <recommendedName>
        <fullName evidence="1">Elongation factor G</fullName>
        <shortName evidence="1">EF-G</shortName>
    </recommendedName>
</protein>
<sequence length="704" mass="76887">MARQVGLANVRNIGIMAHIDAGKTTTTERILYYTGRLHRMGEVHDGGATMDWMEQEKERGITITSAATTCFWEPKGGNFVDVKHRINIIDTPGHVDFTVEVERSLRVLDGAVALFCAVGGVEPQSETVWRQANKYKVPRIAYVNKMDRVGADFYAAVKAVKERLGANPVPIQIPIGQGEIFAGVVDLIRMKGIIYDKEDGSTFEEVEIPHDLETEAKHWRINMLEAVSEVDETLLEKYLEGEDITEAEVRKVLREATLNGSIIPALCGSSFKNKGVQFMLDAVIEYLPSPVDVGSVTGHHPGDDSGISRKPSDDEPFAGLAFKIATDPFVGKLTFFRVYSGVLEAGSYVLNALTGKKERVGRLMQMHSNKREDRDAVFAGDIAAAVGLKDVKTGDTLCDAGKPIVLEKMVFPEPVIQIAIEPKTKADSDKLGVSLGKLAEEDPTFRVSSDEETGQTLIAGMGELHLEVLVDRLKREFKVEANVGQPQVAYRETIRGTVEHEGKFVRQSGGKGQFGLVNIKVEPLEEGKGYEFVDAIKGGVVPKEYIPAVSAGIQEAMKDGVVAGYPVQDVKVTLYDGKYHDVDSSEMSFKIAGSIGFKGAARKANPVLLEPIMKVEVITPEEYLGDVMGDLSSRRGHIDGMGERAGAQFVKASVPLAQMFGYSTVLRSMTQGRANYTMEFECYNEVPKSVAEALQEKSGVKGDG</sequence>
<name>EFG_CHLPB</name>
<reference key="1">
    <citation type="submission" date="2008-06" db="EMBL/GenBank/DDBJ databases">
        <title>Complete sequence of Chlorobium phaeobacteroides BS1.</title>
        <authorList>
            <consortium name="US DOE Joint Genome Institute"/>
            <person name="Lucas S."/>
            <person name="Copeland A."/>
            <person name="Lapidus A."/>
            <person name="Glavina del Rio T."/>
            <person name="Dalin E."/>
            <person name="Tice H."/>
            <person name="Bruce D."/>
            <person name="Goodwin L."/>
            <person name="Pitluck S."/>
            <person name="Schmutz J."/>
            <person name="Larimer F."/>
            <person name="Land M."/>
            <person name="Hauser L."/>
            <person name="Kyrpides N."/>
            <person name="Ovchinnikova G."/>
            <person name="Li T."/>
            <person name="Liu Z."/>
            <person name="Zhao F."/>
            <person name="Overmann J."/>
            <person name="Bryant D.A."/>
            <person name="Richardson P."/>
        </authorList>
    </citation>
    <scope>NUCLEOTIDE SEQUENCE [LARGE SCALE GENOMIC DNA]</scope>
    <source>
        <strain>BS1</strain>
    </source>
</reference>
<gene>
    <name evidence="1" type="primary">fusA</name>
    <name type="ordered locus">Cphamn1_2299</name>
</gene>